<dbReference type="EC" id="4.1.1.48" evidence="1"/>
<dbReference type="EMBL" id="CP000471">
    <property type="protein sequence ID" value="ABK44832.1"/>
    <property type="molecule type" value="Genomic_DNA"/>
</dbReference>
<dbReference type="RefSeq" id="WP_011713953.1">
    <property type="nucleotide sequence ID" value="NC_008576.1"/>
</dbReference>
<dbReference type="SMR" id="A0LA39"/>
<dbReference type="STRING" id="156889.Mmc1_2332"/>
<dbReference type="KEGG" id="mgm:Mmc1_2332"/>
<dbReference type="eggNOG" id="COG0134">
    <property type="taxonomic scope" value="Bacteria"/>
</dbReference>
<dbReference type="HOGENOM" id="CLU_034247_2_0_5"/>
<dbReference type="OrthoDB" id="9804217at2"/>
<dbReference type="UniPathway" id="UPA00035">
    <property type="reaction ID" value="UER00043"/>
</dbReference>
<dbReference type="Proteomes" id="UP000002586">
    <property type="component" value="Chromosome"/>
</dbReference>
<dbReference type="GO" id="GO:0004425">
    <property type="term" value="F:indole-3-glycerol-phosphate synthase activity"/>
    <property type="evidence" value="ECO:0007669"/>
    <property type="project" value="UniProtKB-UniRule"/>
</dbReference>
<dbReference type="GO" id="GO:0004640">
    <property type="term" value="F:phosphoribosylanthranilate isomerase activity"/>
    <property type="evidence" value="ECO:0007669"/>
    <property type="project" value="TreeGrafter"/>
</dbReference>
<dbReference type="GO" id="GO:0000162">
    <property type="term" value="P:L-tryptophan biosynthetic process"/>
    <property type="evidence" value="ECO:0007669"/>
    <property type="project" value="UniProtKB-UniRule"/>
</dbReference>
<dbReference type="CDD" id="cd00331">
    <property type="entry name" value="IGPS"/>
    <property type="match status" value="1"/>
</dbReference>
<dbReference type="FunFam" id="3.20.20.70:FF:000024">
    <property type="entry name" value="Indole-3-glycerol phosphate synthase"/>
    <property type="match status" value="1"/>
</dbReference>
<dbReference type="Gene3D" id="3.20.20.70">
    <property type="entry name" value="Aldolase class I"/>
    <property type="match status" value="1"/>
</dbReference>
<dbReference type="HAMAP" id="MF_00134_B">
    <property type="entry name" value="IGPS_B"/>
    <property type="match status" value="1"/>
</dbReference>
<dbReference type="InterPro" id="IPR013785">
    <property type="entry name" value="Aldolase_TIM"/>
</dbReference>
<dbReference type="InterPro" id="IPR045186">
    <property type="entry name" value="Indole-3-glycerol_P_synth"/>
</dbReference>
<dbReference type="InterPro" id="IPR013798">
    <property type="entry name" value="Indole-3-glycerol_P_synth_dom"/>
</dbReference>
<dbReference type="InterPro" id="IPR011060">
    <property type="entry name" value="RibuloseP-bd_barrel"/>
</dbReference>
<dbReference type="NCBIfam" id="NF001373">
    <property type="entry name" value="PRK00278.1-6"/>
    <property type="match status" value="1"/>
</dbReference>
<dbReference type="NCBIfam" id="NF001377">
    <property type="entry name" value="PRK00278.2-4"/>
    <property type="match status" value="1"/>
</dbReference>
<dbReference type="PANTHER" id="PTHR22854:SF2">
    <property type="entry name" value="INDOLE-3-GLYCEROL-PHOSPHATE SYNTHASE"/>
    <property type="match status" value="1"/>
</dbReference>
<dbReference type="PANTHER" id="PTHR22854">
    <property type="entry name" value="TRYPTOPHAN BIOSYNTHESIS PROTEIN"/>
    <property type="match status" value="1"/>
</dbReference>
<dbReference type="Pfam" id="PF00218">
    <property type="entry name" value="IGPS"/>
    <property type="match status" value="1"/>
</dbReference>
<dbReference type="SUPFAM" id="SSF51366">
    <property type="entry name" value="Ribulose-phoshate binding barrel"/>
    <property type="match status" value="1"/>
</dbReference>
<sequence length="268" mass="29378">MDILQKIMQQKAQEVAIRRGQVSEAALLQRVKYAPPTQGFAHALLSRAQQGQNGVIAEVKRGSPSKGRIYPEHLAWQPAQIAESYRANGAACISCLTDETFFMGHDAFLQAIRAAVACPVLRKDFLYHSYQVVEARSLGADAILLIMAVLETPQAQELEAAARELGMDVLVEVHDERELEQAHELKTPLMGVNNRNLKTFVTDIETSFRLAARMEKGRLAISESGLNTPEDLARLNEAGIFSFLIGESLMRGGEPGGALAQLLGREVV</sequence>
<name>TRPC_MAGMM</name>
<keyword id="KW-0028">Amino-acid biosynthesis</keyword>
<keyword id="KW-0057">Aromatic amino acid biosynthesis</keyword>
<keyword id="KW-0210">Decarboxylase</keyword>
<keyword id="KW-0456">Lyase</keyword>
<keyword id="KW-1185">Reference proteome</keyword>
<keyword id="KW-0822">Tryptophan biosynthesis</keyword>
<gene>
    <name evidence="1" type="primary">trpC</name>
    <name type="ordered locus">Mmc1_2332</name>
</gene>
<accession>A0LA39</accession>
<protein>
    <recommendedName>
        <fullName evidence="1">Indole-3-glycerol phosphate synthase</fullName>
        <shortName evidence="1">IGPS</shortName>
        <ecNumber evidence="1">4.1.1.48</ecNumber>
    </recommendedName>
</protein>
<comment type="catalytic activity">
    <reaction evidence="1">
        <text>1-(2-carboxyphenylamino)-1-deoxy-D-ribulose 5-phosphate + H(+) = (1S,2R)-1-C-(indol-3-yl)glycerol 3-phosphate + CO2 + H2O</text>
        <dbReference type="Rhea" id="RHEA:23476"/>
        <dbReference type="ChEBI" id="CHEBI:15377"/>
        <dbReference type="ChEBI" id="CHEBI:15378"/>
        <dbReference type="ChEBI" id="CHEBI:16526"/>
        <dbReference type="ChEBI" id="CHEBI:58613"/>
        <dbReference type="ChEBI" id="CHEBI:58866"/>
        <dbReference type="EC" id="4.1.1.48"/>
    </reaction>
</comment>
<comment type="pathway">
    <text evidence="1">Amino-acid biosynthesis; L-tryptophan biosynthesis; L-tryptophan from chorismate: step 4/5.</text>
</comment>
<comment type="similarity">
    <text evidence="1">Belongs to the TrpC family.</text>
</comment>
<proteinExistence type="inferred from homology"/>
<reference key="1">
    <citation type="journal article" date="2009" name="Appl. Environ. Microbiol.">
        <title>Complete genome sequence of the chemolithoautotrophic marine magnetotactic coccus strain MC-1.</title>
        <authorList>
            <person name="Schubbe S."/>
            <person name="Williams T.J."/>
            <person name="Xie G."/>
            <person name="Kiss H.E."/>
            <person name="Brettin T.S."/>
            <person name="Martinez D."/>
            <person name="Ross C.A."/>
            <person name="Schuler D."/>
            <person name="Cox B.L."/>
            <person name="Nealson K.H."/>
            <person name="Bazylinski D.A."/>
        </authorList>
    </citation>
    <scope>NUCLEOTIDE SEQUENCE [LARGE SCALE GENOMIC DNA]</scope>
    <source>
        <strain>ATCC BAA-1437 / JCM 17883 / MC-1</strain>
    </source>
</reference>
<feature type="chain" id="PRO_1000018496" description="Indole-3-glycerol phosphate synthase">
    <location>
        <begin position="1"/>
        <end position="268"/>
    </location>
</feature>
<organism>
    <name type="scientific">Magnetococcus marinus (strain ATCC BAA-1437 / JCM 17883 / MC-1)</name>
    <dbReference type="NCBI Taxonomy" id="156889"/>
    <lineage>
        <taxon>Bacteria</taxon>
        <taxon>Pseudomonadati</taxon>
        <taxon>Pseudomonadota</taxon>
        <taxon>Alphaproteobacteria</taxon>
        <taxon>Magnetococcales</taxon>
        <taxon>Magnetococcaceae</taxon>
        <taxon>Magnetococcus</taxon>
    </lineage>
</organism>
<evidence type="ECO:0000255" key="1">
    <source>
        <dbReference type="HAMAP-Rule" id="MF_00134"/>
    </source>
</evidence>